<name>TRMD_LACH4</name>
<evidence type="ECO:0000255" key="1">
    <source>
        <dbReference type="HAMAP-Rule" id="MF_00605"/>
    </source>
</evidence>
<organism>
    <name type="scientific">Lactobacillus helveticus (strain DPC 4571)</name>
    <dbReference type="NCBI Taxonomy" id="405566"/>
    <lineage>
        <taxon>Bacteria</taxon>
        <taxon>Bacillati</taxon>
        <taxon>Bacillota</taxon>
        <taxon>Bacilli</taxon>
        <taxon>Lactobacillales</taxon>
        <taxon>Lactobacillaceae</taxon>
        <taxon>Lactobacillus</taxon>
    </lineage>
</organism>
<protein>
    <recommendedName>
        <fullName evidence="1">tRNA (guanine-N(1)-)-methyltransferase</fullName>
        <ecNumber evidence="1">2.1.1.228</ecNumber>
    </recommendedName>
    <alternativeName>
        <fullName evidence="1">M1G-methyltransferase</fullName>
    </alternativeName>
    <alternativeName>
        <fullName evidence="1">tRNA [GM37] methyltransferase</fullName>
    </alternativeName>
</protein>
<dbReference type="EC" id="2.1.1.228" evidence="1"/>
<dbReference type="EMBL" id="CP000517">
    <property type="protein sequence ID" value="ABX27367.1"/>
    <property type="molecule type" value="Genomic_DNA"/>
</dbReference>
<dbReference type="RefSeq" id="WP_003627547.1">
    <property type="nucleotide sequence ID" value="NC_010080.1"/>
</dbReference>
<dbReference type="SMR" id="A8YVT2"/>
<dbReference type="KEGG" id="lhe:lhv_1369"/>
<dbReference type="eggNOG" id="COG0336">
    <property type="taxonomic scope" value="Bacteria"/>
</dbReference>
<dbReference type="HOGENOM" id="CLU_047363_0_1_9"/>
<dbReference type="Proteomes" id="UP000000790">
    <property type="component" value="Chromosome"/>
</dbReference>
<dbReference type="GO" id="GO:0005829">
    <property type="term" value="C:cytosol"/>
    <property type="evidence" value="ECO:0007669"/>
    <property type="project" value="TreeGrafter"/>
</dbReference>
<dbReference type="GO" id="GO:0052906">
    <property type="term" value="F:tRNA (guanine(37)-N1)-methyltransferase activity"/>
    <property type="evidence" value="ECO:0007669"/>
    <property type="project" value="UniProtKB-UniRule"/>
</dbReference>
<dbReference type="GO" id="GO:0002939">
    <property type="term" value="P:tRNA N1-guanine methylation"/>
    <property type="evidence" value="ECO:0007669"/>
    <property type="project" value="TreeGrafter"/>
</dbReference>
<dbReference type="CDD" id="cd18080">
    <property type="entry name" value="TrmD-like"/>
    <property type="match status" value="1"/>
</dbReference>
<dbReference type="FunFam" id="1.10.1270.20:FF:000001">
    <property type="entry name" value="tRNA (guanine-N(1)-)-methyltransferase"/>
    <property type="match status" value="1"/>
</dbReference>
<dbReference type="FunFam" id="3.40.1280.10:FF:000001">
    <property type="entry name" value="tRNA (guanine-N(1)-)-methyltransferase"/>
    <property type="match status" value="1"/>
</dbReference>
<dbReference type="Gene3D" id="3.40.1280.10">
    <property type="match status" value="1"/>
</dbReference>
<dbReference type="Gene3D" id="1.10.1270.20">
    <property type="entry name" value="tRNA(m1g37)methyltransferase, domain 2"/>
    <property type="match status" value="1"/>
</dbReference>
<dbReference type="HAMAP" id="MF_00605">
    <property type="entry name" value="TrmD"/>
    <property type="match status" value="1"/>
</dbReference>
<dbReference type="InterPro" id="IPR029028">
    <property type="entry name" value="Alpha/beta_knot_MTases"/>
</dbReference>
<dbReference type="InterPro" id="IPR023148">
    <property type="entry name" value="tRNA_m1G_MeTrfase_C_sf"/>
</dbReference>
<dbReference type="InterPro" id="IPR002649">
    <property type="entry name" value="tRNA_m1G_MeTrfase_TrmD"/>
</dbReference>
<dbReference type="InterPro" id="IPR029026">
    <property type="entry name" value="tRNA_m1G_MTases_N"/>
</dbReference>
<dbReference type="InterPro" id="IPR016009">
    <property type="entry name" value="tRNA_MeTrfase_TRMD/TRM10"/>
</dbReference>
<dbReference type="NCBIfam" id="NF000648">
    <property type="entry name" value="PRK00026.1"/>
    <property type="match status" value="1"/>
</dbReference>
<dbReference type="NCBIfam" id="TIGR00088">
    <property type="entry name" value="trmD"/>
    <property type="match status" value="1"/>
</dbReference>
<dbReference type="PANTHER" id="PTHR46417">
    <property type="entry name" value="TRNA (GUANINE-N(1)-)-METHYLTRANSFERASE"/>
    <property type="match status" value="1"/>
</dbReference>
<dbReference type="PANTHER" id="PTHR46417:SF1">
    <property type="entry name" value="TRNA (GUANINE-N(1)-)-METHYLTRANSFERASE"/>
    <property type="match status" value="1"/>
</dbReference>
<dbReference type="Pfam" id="PF01746">
    <property type="entry name" value="tRNA_m1G_MT"/>
    <property type="match status" value="1"/>
</dbReference>
<dbReference type="PIRSF" id="PIRSF000386">
    <property type="entry name" value="tRNA_mtase"/>
    <property type="match status" value="1"/>
</dbReference>
<dbReference type="SUPFAM" id="SSF75217">
    <property type="entry name" value="alpha/beta knot"/>
    <property type="match status" value="1"/>
</dbReference>
<gene>
    <name evidence="1" type="primary">trmD</name>
    <name type="ordered locus">lhv_1369</name>
</gene>
<proteinExistence type="inferred from homology"/>
<keyword id="KW-0963">Cytoplasm</keyword>
<keyword id="KW-0489">Methyltransferase</keyword>
<keyword id="KW-0949">S-adenosyl-L-methionine</keyword>
<keyword id="KW-0808">Transferase</keyword>
<keyword id="KW-0819">tRNA processing</keyword>
<reference key="1">
    <citation type="journal article" date="2008" name="J. Bacteriol.">
        <title>Genome sequence of Lactobacillus helveticus: an organism distinguished by selective gene loss and IS element expansion.</title>
        <authorList>
            <person name="Callanan M."/>
            <person name="Kaleta P."/>
            <person name="O'Callaghan J."/>
            <person name="O'Sullivan O."/>
            <person name="Jordan K."/>
            <person name="McAuliffe O."/>
            <person name="Sangrador-Vegas A."/>
            <person name="Slattery L."/>
            <person name="Fitzgerald G.F."/>
            <person name="Beresford T."/>
            <person name="Ross R.P."/>
        </authorList>
    </citation>
    <scope>NUCLEOTIDE SEQUENCE [LARGE SCALE GENOMIC DNA]</scope>
    <source>
        <strain>DPC 4571</strain>
    </source>
</reference>
<sequence>MKINVLTLFPDMFTPLQVSMLGRGLEDGKWDLNLVNFRDFTTDVHHHVDDTPYGGGAGMVLQIMPIKKALDSLPSTGKVIITAPQGKTFNEQMAQDWAKEDELTFICGHYEGFDQRVYDLADETVSIGDYVLTGGELPTMSMIDATVRLLPGILGNAASPVEESFSHGLLEYPQYTRPADFEGQKVPEVLTSGNHQKIAEWRHKEALKATYLHRPDMLEDRQLTNEEKKMLEEIKSELD</sequence>
<accession>A8YVT2</accession>
<feature type="chain" id="PRO_1000072639" description="tRNA (guanine-N(1)-)-methyltransferase">
    <location>
        <begin position="1"/>
        <end position="239"/>
    </location>
</feature>
<feature type="binding site" evidence="1">
    <location>
        <position position="108"/>
    </location>
    <ligand>
        <name>S-adenosyl-L-methionine</name>
        <dbReference type="ChEBI" id="CHEBI:59789"/>
    </ligand>
</feature>
<feature type="binding site" evidence="1">
    <location>
        <begin position="127"/>
        <end position="132"/>
    </location>
    <ligand>
        <name>S-adenosyl-L-methionine</name>
        <dbReference type="ChEBI" id="CHEBI:59789"/>
    </ligand>
</feature>
<comment type="function">
    <text evidence="1">Specifically methylates guanosine-37 in various tRNAs.</text>
</comment>
<comment type="catalytic activity">
    <reaction evidence="1">
        <text>guanosine(37) in tRNA + S-adenosyl-L-methionine = N(1)-methylguanosine(37) in tRNA + S-adenosyl-L-homocysteine + H(+)</text>
        <dbReference type="Rhea" id="RHEA:36899"/>
        <dbReference type="Rhea" id="RHEA-COMP:10145"/>
        <dbReference type="Rhea" id="RHEA-COMP:10147"/>
        <dbReference type="ChEBI" id="CHEBI:15378"/>
        <dbReference type="ChEBI" id="CHEBI:57856"/>
        <dbReference type="ChEBI" id="CHEBI:59789"/>
        <dbReference type="ChEBI" id="CHEBI:73542"/>
        <dbReference type="ChEBI" id="CHEBI:74269"/>
        <dbReference type="EC" id="2.1.1.228"/>
    </reaction>
</comment>
<comment type="subunit">
    <text evidence="1">Homodimer.</text>
</comment>
<comment type="subcellular location">
    <subcellularLocation>
        <location evidence="1">Cytoplasm</location>
    </subcellularLocation>
</comment>
<comment type="similarity">
    <text evidence="1">Belongs to the RNA methyltransferase TrmD family.</text>
</comment>